<reference key="1">
    <citation type="submission" date="1998-07" db="EMBL/GenBank/DDBJ databases">
        <title>Genes required for c-type cytochrome biogenesis.</title>
        <authorList>
            <person name="Inoue K."/>
            <person name="Bryant D.A."/>
        </authorList>
    </citation>
    <scope>NUCLEOTIDE SEQUENCE [GENOMIC DNA]</scope>
</reference>
<reference key="2">
    <citation type="journal article" date="2007" name="Photosyn. Res.">
        <title>Complete nucleotide sequence of the freshwater unicellular cyanobacterium Synechococcus elongatus PCC 6301 chromosome: gene content and organization.</title>
        <authorList>
            <person name="Sugita C."/>
            <person name="Ogata K."/>
            <person name="Shikata M."/>
            <person name="Jikuya H."/>
            <person name="Takano J."/>
            <person name="Furumichi M."/>
            <person name="Kanehisa M."/>
            <person name="Omata T."/>
            <person name="Sugiura M."/>
            <person name="Sugita M."/>
        </authorList>
    </citation>
    <scope>NUCLEOTIDE SEQUENCE [LARGE SCALE GENOMIC DNA]</scope>
    <source>
        <strain>ATCC 27144 / PCC 6301 / SAUG 1402/1</strain>
    </source>
</reference>
<protein>
    <recommendedName>
        <fullName evidence="1">Cytochrome c biogenesis protein CcsB</fullName>
    </recommendedName>
</protein>
<name>CCS1_SYNP6</name>
<proteinExistence type="inferred from homology"/>
<organism>
    <name type="scientific">Synechococcus sp. (strain ATCC 27144 / PCC 6301 / SAUG 1402/1)</name>
    <name type="common">Anacystis nidulans</name>
    <dbReference type="NCBI Taxonomy" id="269084"/>
    <lineage>
        <taxon>Bacteria</taxon>
        <taxon>Bacillati</taxon>
        <taxon>Cyanobacteriota</taxon>
        <taxon>Cyanophyceae</taxon>
        <taxon>Synechococcales</taxon>
        <taxon>Synechococcaceae</taxon>
        <taxon>Synechococcus</taxon>
    </lineage>
</organism>
<comment type="function">
    <text evidence="1">Required during biogenesis of c-type cytochromes (cytochrome c6 and cytochrome f) at the step of heme attachment.</text>
</comment>
<comment type="subunit">
    <text evidence="1">May interact with CcsA.</text>
</comment>
<comment type="subcellular location">
    <subcellularLocation>
        <location evidence="1">Cellular thylakoid membrane</location>
        <topology evidence="1">Multi-pass membrane protein</topology>
    </subcellularLocation>
</comment>
<comment type="similarity">
    <text evidence="1">Belongs to the Ccs1/CcsB family.</text>
</comment>
<evidence type="ECO:0000255" key="1">
    <source>
        <dbReference type="HAMAP-Rule" id="MF_01392"/>
    </source>
</evidence>
<feature type="chain" id="PRO_0000363626" description="Cytochrome c biogenesis protein CcsB">
    <location>
        <begin position="1"/>
        <end position="456"/>
    </location>
</feature>
<feature type="transmembrane region" description="Helical" evidence="1">
    <location>
        <begin position="29"/>
        <end position="49"/>
    </location>
</feature>
<feature type="transmembrane region" description="Helical" evidence="1">
    <location>
        <begin position="88"/>
        <end position="108"/>
    </location>
</feature>
<feature type="transmembrane region" description="Helical" evidence="1">
    <location>
        <begin position="174"/>
        <end position="194"/>
    </location>
</feature>
<accession>Q9R6T0</accession>
<sequence length="456" mass="50461">MTSDPLASPSFADRWRRGQQLFWTWLADLRLAILLLLAIAIASATGTVIEQGQSLAFYQENYPTDPALFGFLSWRWILSLGLDHVYRAGWFLGLLILFGASLTACTFRRQWPALRAAQRWQFYQEPRQFTKLALSASLPQGKLDSLEPLLLQRRYRLFRADDVLYARRGLAGRVGPILVHAGMLVVLGGAIWGSLGGFYAQEMIPSGETFQVRNIVDAGPWSGSRIPQDWAVKVNRFWIDYAPDGRIDQFYSDLSVVDREGQEQDRQTIHVNQPLRYGGLTFYQADWAIAAAQVRLNNSPVLQLPMAQLPAAGRIWGTFVPTKPDLSSGVSLIAKDLQGTAVIYGSNGEPLGTLRKGMAIEVEGIRLSLVDLVGSTGLQIKSDPGIPWVYAGFLFVMVGVVCSYVSHAQVWALEQDGQLYIGGRSNRALVAFEQEMLAVLAQLDAQSNHSAETAIA</sequence>
<gene>
    <name evidence="1" type="primary">ccsB</name>
    <name evidence="1" type="synonym">ccs1</name>
    <name type="ordered locus">syc1191_d</name>
</gene>
<keyword id="KW-0201">Cytochrome c-type biogenesis</keyword>
<keyword id="KW-0472">Membrane</keyword>
<keyword id="KW-0793">Thylakoid</keyword>
<keyword id="KW-0812">Transmembrane</keyword>
<keyword id="KW-1133">Transmembrane helix</keyword>
<dbReference type="EMBL" id="AF079137">
    <property type="protein sequence ID" value="AAF04332.1"/>
    <property type="molecule type" value="Genomic_DNA"/>
</dbReference>
<dbReference type="EMBL" id="AP008231">
    <property type="protein sequence ID" value="BAD79381.1"/>
    <property type="molecule type" value="Genomic_DNA"/>
</dbReference>
<dbReference type="RefSeq" id="WP_011243503.1">
    <property type="nucleotide sequence ID" value="NZ_CP085785.1"/>
</dbReference>
<dbReference type="KEGG" id="syc:syc1191_d"/>
<dbReference type="eggNOG" id="COG1333">
    <property type="taxonomic scope" value="Bacteria"/>
</dbReference>
<dbReference type="Proteomes" id="UP000001175">
    <property type="component" value="Chromosome"/>
</dbReference>
<dbReference type="GO" id="GO:0031676">
    <property type="term" value="C:plasma membrane-derived thylakoid membrane"/>
    <property type="evidence" value="ECO:0007669"/>
    <property type="project" value="UniProtKB-SubCell"/>
</dbReference>
<dbReference type="GO" id="GO:0017004">
    <property type="term" value="P:cytochrome complex assembly"/>
    <property type="evidence" value="ECO:0007669"/>
    <property type="project" value="UniProtKB-UniRule"/>
</dbReference>
<dbReference type="HAMAP" id="MF_01392">
    <property type="entry name" value="CytC_Ccs1"/>
    <property type="match status" value="1"/>
</dbReference>
<dbReference type="InterPro" id="IPR023494">
    <property type="entry name" value="Cyt_c_bgen_Ccs1/CcsB/ResB"/>
</dbReference>
<dbReference type="InterPro" id="IPR007816">
    <property type="entry name" value="ResB-like_domain"/>
</dbReference>
<dbReference type="PANTHER" id="PTHR31566">
    <property type="entry name" value="CYTOCHROME C BIOGENESIS PROTEIN CCS1, CHLOROPLASTIC"/>
    <property type="match status" value="1"/>
</dbReference>
<dbReference type="PANTHER" id="PTHR31566:SF0">
    <property type="entry name" value="CYTOCHROME C BIOGENESIS PROTEIN CCS1, CHLOROPLASTIC"/>
    <property type="match status" value="1"/>
</dbReference>
<dbReference type="Pfam" id="PF05140">
    <property type="entry name" value="ResB"/>
    <property type="match status" value="2"/>
</dbReference>